<sequence length="1361" mass="153784">MWGGGKMAVVSLSPHTAKMRKLFGQASTTMAYDGLKREAERRTRSDHNITMVAKDDELYLYHLTLKKQTNFVHSCIGHFVDLEAGSKREQSQLCVATETHLELYDTADGELKLIAKFQNLFATITSMKSLDLPHSGSRAKASNWPTFLALTSDSGNLSIVQIIMHAGALRLKTLVNQPLTRTTLRRVSPISYMEIDPNGRCIILSSVEQNKLCFLVDYAQKLRISSPLEIIRPHMVTLDMAVVDVNFNNPCFVTLEIDNAATQLSVHLIFYVLELGLNHIVKKADYLVNPSANFVLSLPDLSRYNITTSLSDNNYDADYDTLFNPFVVIGFENHILVKDMNGFFSLKVEIPKRSITNSRHKNVTIISGIVQKLKNDFFVLLQSNHGDLFKLTVSPDTNDRNRPLVQLSYFDTIQNSHQLHIFKNGYLFALSEMNNNFLFQFEKLGVEKNDFSNVLTSKDPNKSLVFEPSIKLQNLSILSQQLNLNPSIKSQIVSDSPLSIATKHFTNNKIITLTNAVNYSNLISTSLPPNATKLWLIPDPATTGDNNTLLFITFPKKTMILQIDNESMEELTPDEATRSAFKLSQDTTIHTCLMGSHSIIQVCTAELRHIVPTGKSRYSNKLTWVPPAGIRIVCATSSKTQLIISLSNYELVYFKIDVSSDSLIELTTHPELDTMPSKVAIVQDTQHADLLAIADNEGMIKIMSLKDQKEDFLTVISLQLVSEKISDMIMVRDSSIGQLNLHVGLENGVYMKFHIGDVDGSFTDIKRRFLGLKPVSLSYLREISVSLNNEEEEEEEEDDDDEKEEEEINSSGAKWMSCVVCHSSSTWVSYTWKNVWTIRQLKDQNMLSCSKFVNADVAINGVCSISSSGRLNIGRVSNFPTLDNWFHVHESSVNKQENGGGDESNEEEEDEMEEEMEMLQISTFRPRTILSFPNNPKSILFIDNHSGKKQCRISLQIDGECLKFGSSDHLYKILDDIDCVSAAIIDFTRQADHLIICAGDKRLLTYKILVNKDKLSFDIELLHQTEIISPIHAMLKFKNFLLTAMGSTIVLYGLGKKQLLRRSVTQTPVSITKIVSMHQWNYERLAVGDIHESVTLFIWDPAGNVFIPYVDDSVKRHVTVLKFLDEATVIGADRYGNAWTLRSPPECEKIMSNHDPSELSNGAIKYPLDVITLQQKLPNTYDCKFKFQLLNHFFVNDIITDFHILDSLSNSDRPGCIYMGLQGTVGCFIPLLSKGNVFMMGNIENIMAEADDTFYLDYESRKKNNNMRKEDDEEESGSVVLQGRHGIEDEIICEGSCSILGRDHQEYRSYYAPVRKVIDGDLCENFLRLSLNEQEFLAKNLKSVQVEDIIQTINEVRTNYM</sequence>
<proteinExistence type="evidence at protein level"/>
<organism>
    <name type="scientific">Saccharomyces cerevisiae (strain ATCC 204508 / S288c)</name>
    <name type="common">Baker's yeast</name>
    <dbReference type="NCBI Taxonomy" id="559292"/>
    <lineage>
        <taxon>Eukaryota</taxon>
        <taxon>Fungi</taxon>
        <taxon>Dikarya</taxon>
        <taxon>Ascomycota</taxon>
        <taxon>Saccharomycotina</taxon>
        <taxon>Saccharomycetes</taxon>
        <taxon>Saccharomycetales</taxon>
        <taxon>Saccharomycetaceae</taxon>
        <taxon>Saccharomyces</taxon>
    </lineage>
</organism>
<name>RSE1_YEAST</name>
<accession>Q04693</accession>
<accession>D6VZC6</accession>
<dbReference type="EMBL" id="Z47816">
    <property type="protein sequence ID" value="CAA87825.1"/>
    <property type="molecule type" value="Genomic_DNA"/>
</dbReference>
<dbReference type="EMBL" id="BK006946">
    <property type="protein sequence ID" value="DAA09850.1"/>
    <property type="molecule type" value="Genomic_DNA"/>
</dbReference>
<dbReference type="PIR" id="S50943">
    <property type="entry name" value="S50943"/>
</dbReference>
<dbReference type="RefSeq" id="NP_013663.1">
    <property type="nucleotide sequence ID" value="NM_001182407.1"/>
</dbReference>
<dbReference type="PDB" id="5GM6">
    <property type="method" value="EM"/>
    <property type="resolution" value="3.50 A"/>
    <property type="chains" value="F=1-1361"/>
</dbReference>
<dbReference type="PDB" id="5LQW">
    <property type="method" value="EM"/>
    <property type="resolution" value="5.80 A"/>
    <property type="chains" value="X=1-1361"/>
</dbReference>
<dbReference type="PDB" id="5NRL">
    <property type="method" value="EM"/>
    <property type="resolution" value="7.20 A"/>
    <property type="chains" value="P=1-1361"/>
</dbReference>
<dbReference type="PDB" id="5ZWM">
    <property type="method" value="EM"/>
    <property type="resolution" value="3.40 A"/>
    <property type="chains" value="3=1-1361"/>
</dbReference>
<dbReference type="PDB" id="5ZWO">
    <property type="method" value="EM"/>
    <property type="resolution" value="3.90 A"/>
    <property type="chains" value="3=1-1361"/>
</dbReference>
<dbReference type="PDB" id="6G90">
    <property type="method" value="EM"/>
    <property type="resolution" value="4.00 A"/>
    <property type="chains" value="P=1-1361"/>
</dbReference>
<dbReference type="PDB" id="7OQB">
    <property type="method" value="EM"/>
    <property type="resolution" value="9.00 A"/>
    <property type="chains" value="P=1-1361"/>
</dbReference>
<dbReference type="PDB" id="7OQE">
    <property type="method" value="EM"/>
    <property type="resolution" value="5.90 A"/>
    <property type="chains" value="P=1-1361"/>
</dbReference>
<dbReference type="PDBsum" id="5GM6"/>
<dbReference type="PDBsum" id="5LQW"/>
<dbReference type="PDBsum" id="5NRL"/>
<dbReference type="PDBsum" id="5ZWM"/>
<dbReference type="PDBsum" id="5ZWO"/>
<dbReference type="PDBsum" id="6G90"/>
<dbReference type="PDBsum" id="7OQB"/>
<dbReference type="PDBsum" id="7OQE"/>
<dbReference type="EMDB" id="EMD-13028"/>
<dbReference type="EMDB" id="EMD-13033"/>
<dbReference type="EMDB" id="EMD-3683"/>
<dbReference type="EMDB" id="EMD-4364"/>
<dbReference type="EMDB" id="EMD-6972"/>
<dbReference type="EMDB" id="EMD-6974"/>
<dbReference type="EMDB" id="EMD-9524"/>
<dbReference type="SMR" id="Q04693"/>
<dbReference type="BioGRID" id="35119">
    <property type="interactions" value="244"/>
</dbReference>
<dbReference type="ComplexPortal" id="CPX-1647">
    <property type="entry name" value="SF3B complex"/>
</dbReference>
<dbReference type="ComplexPortal" id="CPX-1651">
    <property type="entry name" value="PRP19-associated complex"/>
</dbReference>
<dbReference type="ComplexPortal" id="CPX-26">
    <property type="entry name" value="U2 small nuclear ribonucleoprotein complex"/>
</dbReference>
<dbReference type="DIP" id="DIP-856N"/>
<dbReference type="FunCoup" id="Q04693">
    <property type="interactions" value="1587"/>
</dbReference>
<dbReference type="IntAct" id="Q04693">
    <property type="interactions" value="58"/>
</dbReference>
<dbReference type="MINT" id="Q04693"/>
<dbReference type="STRING" id="4932.YML049C"/>
<dbReference type="GlyGen" id="Q04693">
    <property type="glycosylation" value="2 sites, 1 O-linked glycan (2 sites)"/>
</dbReference>
<dbReference type="iPTMnet" id="Q04693"/>
<dbReference type="PaxDb" id="4932-YML049C"/>
<dbReference type="PeptideAtlas" id="Q04693"/>
<dbReference type="TopDownProteomics" id="Q04693"/>
<dbReference type="EnsemblFungi" id="YML049C_mRNA">
    <property type="protein sequence ID" value="YML049C"/>
    <property type="gene ID" value="YML049C"/>
</dbReference>
<dbReference type="GeneID" id="854956"/>
<dbReference type="KEGG" id="sce:YML049C"/>
<dbReference type="AGR" id="SGD:S000004513"/>
<dbReference type="SGD" id="S000004513">
    <property type="gene designation" value="RSE1"/>
</dbReference>
<dbReference type="VEuPathDB" id="FungiDB:YML049C"/>
<dbReference type="eggNOG" id="KOG1898">
    <property type="taxonomic scope" value="Eukaryota"/>
</dbReference>
<dbReference type="GeneTree" id="ENSGT00950000183151"/>
<dbReference type="HOGENOM" id="CLU_003246_0_1_1"/>
<dbReference type="InParanoid" id="Q04693"/>
<dbReference type="OMA" id="PRATGHW"/>
<dbReference type="OrthoDB" id="436637at2759"/>
<dbReference type="BioCyc" id="YEAST:G3O-32646-MONOMER"/>
<dbReference type="BioGRID-ORCS" id="854956">
    <property type="hits" value="0 hits in 10 CRISPR screens"/>
</dbReference>
<dbReference type="PRO" id="PR:Q04693"/>
<dbReference type="Proteomes" id="UP000002311">
    <property type="component" value="Chromosome XIII"/>
</dbReference>
<dbReference type="RNAct" id="Q04693">
    <property type="molecule type" value="protein"/>
</dbReference>
<dbReference type="GO" id="GO:0005634">
    <property type="term" value="C:nucleus"/>
    <property type="evidence" value="ECO:0000318"/>
    <property type="project" value="GO_Central"/>
</dbReference>
<dbReference type="GO" id="GO:0000974">
    <property type="term" value="C:Prp19 complex"/>
    <property type="evidence" value="ECO:0000353"/>
    <property type="project" value="ComplexPortal"/>
</dbReference>
<dbReference type="GO" id="GO:0005681">
    <property type="term" value="C:spliceosomal complex"/>
    <property type="evidence" value="ECO:0000303"/>
    <property type="project" value="ComplexPortal"/>
</dbReference>
<dbReference type="GO" id="GO:0005686">
    <property type="term" value="C:U2 snRNP"/>
    <property type="evidence" value="ECO:0000314"/>
    <property type="project" value="SGD"/>
</dbReference>
<dbReference type="GO" id="GO:0071004">
    <property type="term" value="C:U2-type prespliceosome"/>
    <property type="evidence" value="ECO:0000314"/>
    <property type="project" value="SGD"/>
</dbReference>
<dbReference type="GO" id="GO:0005684">
    <property type="term" value="C:U2-type spliceosomal complex"/>
    <property type="evidence" value="ECO:0000353"/>
    <property type="project" value="ComplexPortal"/>
</dbReference>
<dbReference type="GO" id="GO:0030620">
    <property type="term" value="F:U2 snRNA binding"/>
    <property type="evidence" value="ECO:0000314"/>
    <property type="project" value="SGD"/>
</dbReference>
<dbReference type="GO" id="GO:0000398">
    <property type="term" value="P:mRNA splicing, via spliceosome"/>
    <property type="evidence" value="ECO:0000315"/>
    <property type="project" value="SGD"/>
</dbReference>
<dbReference type="GO" id="GO:0000245">
    <property type="term" value="P:spliceosomal complex assembly"/>
    <property type="evidence" value="ECO:0000314"/>
    <property type="project" value="SGD"/>
</dbReference>
<dbReference type="GO" id="GO:1903241">
    <property type="term" value="P:U2-type prespliceosome assembly"/>
    <property type="evidence" value="ECO:0000303"/>
    <property type="project" value="ComplexPortal"/>
</dbReference>
<dbReference type="FunFam" id="2.130.10.10:FF:001283">
    <property type="entry name" value="Pre-mRNA-splicing factor RSE1"/>
    <property type="match status" value="1"/>
</dbReference>
<dbReference type="Gene3D" id="2.130.10.10">
    <property type="entry name" value="YVTN repeat-like/Quinoprotein amine dehydrogenase"/>
    <property type="match status" value="2"/>
</dbReference>
<dbReference type="InterPro" id="IPR018846">
    <property type="entry name" value="Beta-prop_RSE1/DDB1/CPSF1_1st"/>
</dbReference>
<dbReference type="InterPro" id="IPR004871">
    <property type="entry name" value="Cleavage/polyA-sp_fac_asu_C"/>
</dbReference>
<dbReference type="InterPro" id="IPR050358">
    <property type="entry name" value="RSE1/DDB1/CFT1/CPSF1"/>
</dbReference>
<dbReference type="InterPro" id="IPR015943">
    <property type="entry name" value="WD40/YVTN_repeat-like_dom_sf"/>
</dbReference>
<dbReference type="PANTHER" id="PTHR10644">
    <property type="entry name" value="DNA REPAIR/RNA PROCESSING CPSF FAMILY"/>
    <property type="match status" value="1"/>
</dbReference>
<dbReference type="Pfam" id="PF10433">
    <property type="entry name" value="Beta-prop_RSE1_1st"/>
    <property type="match status" value="1"/>
</dbReference>
<dbReference type="Pfam" id="PF23726">
    <property type="entry name" value="Beta-prop_RSE1_2nd"/>
    <property type="match status" value="1"/>
</dbReference>
<dbReference type="Pfam" id="PF03178">
    <property type="entry name" value="CPSF_A"/>
    <property type="match status" value="1"/>
</dbReference>
<keyword id="KW-0002">3D-structure</keyword>
<keyword id="KW-0507">mRNA processing</keyword>
<keyword id="KW-0508">mRNA splicing</keyword>
<keyword id="KW-0539">Nucleus</keyword>
<keyword id="KW-1185">Reference proteome</keyword>
<keyword id="KW-0747">Spliceosome</keyword>
<comment type="function">
    <text evidence="1 3 8">Involved in G2/M transition (By similarity). Required for pre-mRNA splicing and endoplasmic reticulum (ER) to Golgi secretion pathway. U2 snRNPs associated protein required for the pre-spliceosome assembly. The involvement in ER to Golgi secretion is probably indirect and due to the splicing of the pre-mRNA coding for SAR1, a small GTP-binding protein required for COPII vesicle formation from the ER.</text>
</comment>
<comment type="subunit">
    <text evidence="4 5 6 7">Belongs to the SF3B complex, a U2 associated sub-complex of the spliceosome. The SF3B complex is composed of at least CUS1, HSH49, HSH155, RDS3 and RSE1. Also belongs to the CWC complex (or CEF1-associated complex), a spliceosome sub-complex reminiscent of a late-stage spliceosome composed of the U2, U5 and U6 snRNAs and at least BUD13, BUD31, BRR2, CDC40, CEF1, CLF1, CUS1, CWC2, CWC15, CWC21, CWC22, CWC23, CWC24, CWC25, CWC27, ECM2, HSH155, IST3, ISY1, LEA1, MSL1, NTC20, PRP8, PRP9, PRP11, PRP19, PRP21, PRP22, PRP45, PRP46, SLU7, SMB1, SMD1, SMD2, SMD3, SMX2, SMX3, SNT309, SNU114, SPP2, SYF1, SYF2, RSE1 and YJU2. Interacts with RDS3.</text>
</comment>
<comment type="interaction">
    <interactant intactId="EBI-519">
        <id>Q04693</id>
    </interactant>
    <interactant intactId="EBI-664">
        <id>P49955</id>
        <label>HSH155</label>
    </interactant>
    <organismsDiffer>false</organismsDiffer>
    <experiments>4</experiments>
</comment>
<comment type="subcellular location">
    <subcellularLocation>
        <location evidence="1">Nucleus</location>
    </subcellularLocation>
</comment>
<comment type="similarity">
    <text evidence="9">Belongs to the RSE1 family.</text>
</comment>
<reference key="1">
    <citation type="journal article" date="1997" name="Nature">
        <title>The nucleotide sequence of Saccharomyces cerevisiae chromosome XIII.</title>
        <authorList>
            <person name="Bowman S."/>
            <person name="Churcher C.M."/>
            <person name="Badcock K."/>
            <person name="Brown D."/>
            <person name="Chillingworth T."/>
            <person name="Connor R."/>
            <person name="Dedman K."/>
            <person name="Devlin K."/>
            <person name="Gentles S."/>
            <person name="Hamlin N."/>
            <person name="Hunt S."/>
            <person name="Jagels K."/>
            <person name="Lye G."/>
            <person name="Moule S."/>
            <person name="Odell C."/>
            <person name="Pearson D."/>
            <person name="Rajandream M.A."/>
            <person name="Rice P."/>
            <person name="Skelton J."/>
            <person name="Walsh S.V."/>
            <person name="Whitehead S."/>
            <person name="Barrell B.G."/>
        </authorList>
    </citation>
    <scope>NUCLEOTIDE SEQUENCE [LARGE SCALE GENOMIC DNA]</scope>
    <source>
        <strain>ATCC 204508 / S288c</strain>
    </source>
</reference>
<reference key="2">
    <citation type="journal article" date="2014" name="G3 (Bethesda)">
        <title>The reference genome sequence of Saccharomyces cerevisiae: Then and now.</title>
        <authorList>
            <person name="Engel S.R."/>
            <person name="Dietrich F.S."/>
            <person name="Fisk D.G."/>
            <person name="Binkley G."/>
            <person name="Balakrishnan R."/>
            <person name="Costanzo M.C."/>
            <person name="Dwight S.S."/>
            <person name="Hitz B.C."/>
            <person name="Karra K."/>
            <person name="Nash R.S."/>
            <person name="Weng S."/>
            <person name="Wong E.D."/>
            <person name="Lloyd P."/>
            <person name="Skrzypek M.S."/>
            <person name="Miyasato S.R."/>
            <person name="Simison M."/>
            <person name="Cherry J.M."/>
        </authorList>
    </citation>
    <scope>GENOME REANNOTATION</scope>
    <source>
        <strain>ATCC 204508 / S288c</strain>
    </source>
</reference>
<reference key="3">
    <citation type="journal article" date="1998" name="Mol. Cell. Biol.">
        <title>A link between secretion and pre-mRNA processing defects in Saccharomyces cerevisiae and the identification of a novel splicing gene, RSE1.</title>
        <authorList>
            <person name="Chen E.J."/>
            <person name="Frand A.R."/>
            <person name="Chitouras E."/>
            <person name="Kaiser C.A."/>
        </authorList>
    </citation>
    <scope>FUNCTION</scope>
</reference>
<reference key="4">
    <citation type="journal article" date="1999" name="EMBO J.">
        <title>Partial purification of the yeast U2 snRNP reveals a novel yeast pre-mRNA splicing factor required for pre-spliceosome assembly.</title>
        <authorList>
            <person name="Caspary F."/>
            <person name="Shevchenko A."/>
            <person name="Wilm M."/>
            <person name="Seraphin B."/>
        </authorList>
    </citation>
    <scope>FUNCTION</scope>
    <scope>ASSOCIATION WITH THE PRE-SPLICEOSOME</scope>
</reference>
<reference key="5">
    <citation type="journal article" date="1999" name="EMBO J.">
        <title>Identification by mass spectrometry and functional analysis of novel proteins of the yeast [U4/U6.U5] tri-snRNP.</title>
        <authorList>
            <person name="Gottschalk A."/>
            <person name="Neubauer G."/>
            <person name="Banroques J."/>
            <person name="Mann M."/>
            <person name="Luehrmann R."/>
            <person name="Fabrizio P."/>
        </authorList>
    </citation>
    <scope>IDENTIFICATION IN THE SPLICEOSOME</scope>
    <scope>IDENTIFICATION BY MASS SPECTROMETRY</scope>
</reference>
<reference key="6">
    <citation type="journal article" date="2002" name="Mol. Cell. Biol.">
        <title>Proteomics analysis reveals stable multiprotein complexes in both fission and budding yeasts containing Myb-related Cdc5p/Cef1p, novel pre-mRNA splicing factors, and snRNAs.</title>
        <authorList>
            <person name="Ohi M.D."/>
            <person name="Link A.J."/>
            <person name="Ren L."/>
            <person name="Jennings J.L."/>
            <person name="McDonald W.H."/>
            <person name="Gould K.L."/>
        </authorList>
    </citation>
    <scope>IDENTIFICATION IN THE CWC COMPLEX</scope>
    <scope>IDENTIFICATION BY MASS SPECTROMETRY</scope>
</reference>
<reference key="7">
    <citation type="journal article" date="2003" name="Mol. Cell. Biol.">
        <title>Rds3p is required for stable U2 snRNP recruitment to the splicing apparatus.</title>
        <authorList>
            <person name="Wang Q."/>
            <person name="Rymond B.C."/>
        </authorList>
    </citation>
    <scope>INTERACTION WITH RDS3</scope>
</reference>
<reference key="8">
    <citation type="journal article" date="2004" name="EMBO J.">
        <title>Proteomic analysis identifies a new complex required for nuclear pre-mRNA retention and splicing.</title>
        <authorList>
            <person name="Dziembowski A."/>
            <person name="Ventura A.-P."/>
            <person name="Rutz B."/>
            <person name="Caspary F."/>
            <person name="Faux C."/>
            <person name="Halgand F."/>
            <person name="Laprevote O."/>
            <person name="Seraphin B."/>
        </authorList>
    </citation>
    <scope>IDENTIFICATION IN THE SF3B COMPLEX</scope>
    <scope>IDENTIFICATION BY MASS SPECTROMETRY</scope>
</reference>
<reference key="9">
    <citation type="journal article" date="2008" name="Mol. Cell. Proteomics">
        <title>A multidimensional chromatography technology for in-depth phosphoproteome analysis.</title>
        <authorList>
            <person name="Albuquerque C.P."/>
            <person name="Smolka M.B."/>
            <person name="Payne S.H."/>
            <person name="Bafna V."/>
            <person name="Eng J."/>
            <person name="Zhou H."/>
        </authorList>
    </citation>
    <scope>IDENTIFICATION BY MASS SPECTROMETRY [LARGE SCALE ANALYSIS]</scope>
</reference>
<feature type="chain" id="PRO_0000218638" description="Pre-mRNA-splicing factor RSE1">
    <location>
        <begin position="1"/>
        <end position="1361"/>
    </location>
</feature>
<feature type="region of interest" description="Disordered" evidence="2">
    <location>
        <begin position="788"/>
        <end position="811"/>
    </location>
</feature>
<feature type="region of interest" description="Disordered" evidence="2">
    <location>
        <begin position="893"/>
        <end position="912"/>
    </location>
</feature>
<feature type="compositionally biased region" description="Acidic residues" evidence="2">
    <location>
        <begin position="789"/>
        <end position="808"/>
    </location>
</feature>
<feature type="compositionally biased region" description="Acidic residues" evidence="2">
    <location>
        <begin position="903"/>
        <end position="912"/>
    </location>
</feature>
<evidence type="ECO:0000250" key="1"/>
<evidence type="ECO:0000256" key="2">
    <source>
        <dbReference type="SAM" id="MobiDB-lite"/>
    </source>
</evidence>
<evidence type="ECO:0000269" key="3">
    <source>
    </source>
</evidence>
<evidence type="ECO:0000269" key="4">
    <source>
    </source>
</evidence>
<evidence type="ECO:0000269" key="5">
    <source>
    </source>
</evidence>
<evidence type="ECO:0000269" key="6">
    <source>
    </source>
</evidence>
<evidence type="ECO:0000269" key="7">
    <source>
    </source>
</evidence>
<evidence type="ECO:0000269" key="8">
    <source>
    </source>
</evidence>
<evidence type="ECO:0000305" key="9"/>
<gene>
    <name type="primary">RSE1</name>
    <name type="synonym">SAP130</name>
    <name type="ordered locus">YML049C</name>
    <name type="ORF">YM9827.03C</name>
</gene>
<protein>
    <recommendedName>
        <fullName>Pre-mRNA-splicing factor RSE1</fullName>
    </recommendedName>
    <alternativeName>
        <fullName>RNA splicing and ER to Golgi transport factor 1</fullName>
    </alternativeName>
    <alternativeName>
        <fullName>Spliceosome-associated protein 130</fullName>
    </alternativeName>
</protein>